<comment type="function">
    <text evidence="4 5">Involved in iron-sulfur cluster biogenesis under severe conditions such as iron starvation or oxidative stress. Binds a 4Fe-4S cluster, can transfer this cluster to apoproteins, and thereby intervenes in the maturation of Fe/S proteins. Could also act as a scaffold/chaperone for damaged Fe/S proteins. Required for E.coli to sustain oxidative stress and iron starvation. Also necessary for the use of extracellular DNA as the sole source of carbon and energy.</text>
</comment>
<comment type="cofactor">
    <cofactor>
        <name>[4Fe-4S] cluster</name>
        <dbReference type="ChEBI" id="CHEBI:49883"/>
    </cofactor>
    <text>Binds 1 [4Fe-4S] cluster per subunit. The cluster is presumably bound at the interface of two monomers.</text>
</comment>
<comment type="subunit">
    <text evidence="5">Homodimer.</text>
</comment>
<comment type="induction">
    <text evidence="2 3 5">Up-regulated under conditions of iron depletion or oxidative stress, via IscR. Is also induced by heat shock or the presence of misfolded proteins.</text>
</comment>
<comment type="domain">
    <text evidence="5">Consits of two domains, an N-terminal domain that resembles the so-called Fe/S A-type scaffold, and a C-terminal domain that shares sequence identity with Nfu-type scaffold proteins. Both domains are important for NfuA to fulfill its function in vivo. The N-terminal domain does not possess the three conserved cysteine residues thought to act as Fe/S cluster ligands in A-type scaffold proteins, but may keep the ability to interact with apoproteins.</text>
</comment>
<comment type="disruption phenotype">
    <text evidence="4">Cells express the stationary phase-specific competition-defective (SPCD) phenotype and are unable to catabolize dsDNA.</text>
</comment>
<comment type="similarity">
    <text evidence="7">Belongs to the NfuA family.</text>
</comment>
<comment type="caution">
    <text evidence="8">Was originally thought to be involved in gluconate metabolism and was referred to as GntY.</text>
</comment>
<keyword id="KW-0004">4Fe-4S</keyword>
<keyword id="KW-0408">Iron</keyword>
<keyword id="KW-0411">Iron-sulfur</keyword>
<keyword id="KW-0479">Metal-binding</keyword>
<keyword id="KW-1185">Reference proteome</keyword>
<keyword id="KW-0346">Stress response</keyword>
<proteinExistence type="evidence at protein level"/>
<dbReference type="EMBL" id="U18997">
    <property type="protein sequence ID" value="AAA58212.1"/>
    <property type="molecule type" value="Genomic_DNA"/>
</dbReference>
<dbReference type="EMBL" id="U00096">
    <property type="protein sequence ID" value="AAC76439.1"/>
    <property type="molecule type" value="Genomic_DNA"/>
</dbReference>
<dbReference type="EMBL" id="AP009048">
    <property type="protein sequence ID" value="BAE77877.1"/>
    <property type="molecule type" value="Genomic_DNA"/>
</dbReference>
<dbReference type="PIR" id="A65137">
    <property type="entry name" value="A65137"/>
</dbReference>
<dbReference type="RefSeq" id="NP_417873.1">
    <property type="nucleotide sequence ID" value="NC_000913.3"/>
</dbReference>
<dbReference type="RefSeq" id="WP_000619389.1">
    <property type="nucleotide sequence ID" value="NZ_STEB01000004.1"/>
</dbReference>
<dbReference type="SMR" id="P63020"/>
<dbReference type="BioGRID" id="4261219">
    <property type="interactions" value="436"/>
</dbReference>
<dbReference type="BioGRID" id="852234">
    <property type="interactions" value="1"/>
</dbReference>
<dbReference type="DIP" id="DIP-48001N"/>
<dbReference type="FunCoup" id="P63020">
    <property type="interactions" value="25"/>
</dbReference>
<dbReference type="IntAct" id="P63020">
    <property type="interactions" value="13"/>
</dbReference>
<dbReference type="STRING" id="511145.b3414"/>
<dbReference type="jPOST" id="P63020"/>
<dbReference type="PaxDb" id="511145-b3414"/>
<dbReference type="EnsemblBacteria" id="AAC76439">
    <property type="protein sequence ID" value="AAC76439"/>
    <property type="gene ID" value="b3414"/>
</dbReference>
<dbReference type="GeneID" id="93778582"/>
<dbReference type="GeneID" id="947925"/>
<dbReference type="KEGG" id="ecj:JW3377"/>
<dbReference type="KEGG" id="eco:b3414"/>
<dbReference type="KEGG" id="ecoc:C3026_18520"/>
<dbReference type="PATRIC" id="fig|1411691.4.peg.3314"/>
<dbReference type="EchoBASE" id="EB2771"/>
<dbReference type="eggNOG" id="COG0316">
    <property type="taxonomic scope" value="Bacteria"/>
</dbReference>
<dbReference type="eggNOG" id="COG0694">
    <property type="taxonomic scope" value="Bacteria"/>
</dbReference>
<dbReference type="HOGENOM" id="CLU_094569_0_0_6"/>
<dbReference type="InParanoid" id="P63020"/>
<dbReference type="OMA" id="CLAYCRP"/>
<dbReference type="OrthoDB" id="9785450at2"/>
<dbReference type="PhylomeDB" id="P63020"/>
<dbReference type="BioCyc" id="EcoCyc:G7748-MONOMER"/>
<dbReference type="BioCyc" id="MetaCyc:G7748-MONOMER"/>
<dbReference type="PRO" id="PR:P63020"/>
<dbReference type="Proteomes" id="UP000000625">
    <property type="component" value="Chromosome"/>
</dbReference>
<dbReference type="GO" id="GO:0005829">
    <property type="term" value="C:cytosol"/>
    <property type="evidence" value="ECO:0000314"/>
    <property type="project" value="EcoCyc"/>
</dbReference>
<dbReference type="GO" id="GO:0051539">
    <property type="term" value="F:4 iron, 4 sulfur cluster binding"/>
    <property type="evidence" value="ECO:0000314"/>
    <property type="project" value="EcoCyc"/>
</dbReference>
<dbReference type="GO" id="GO:0005506">
    <property type="term" value="F:iron ion binding"/>
    <property type="evidence" value="ECO:0007669"/>
    <property type="project" value="InterPro"/>
</dbReference>
<dbReference type="GO" id="GO:0140132">
    <property type="term" value="F:iron-sulfur cluster chaperone activity"/>
    <property type="evidence" value="ECO:0000314"/>
    <property type="project" value="EcoCyc"/>
</dbReference>
<dbReference type="GO" id="GO:0042803">
    <property type="term" value="F:protein homodimerization activity"/>
    <property type="evidence" value="ECO:0000314"/>
    <property type="project" value="EcoCyc"/>
</dbReference>
<dbReference type="GO" id="GO:0015976">
    <property type="term" value="P:carbon utilization"/>
    <property type="evidence" value="ECO:0000315"/>
    <property type="project" value="EcoCyc"/>
</dbReference>
<dbReference type="GO" id="GO:0010106">
    <property type="term" value="P:cellular response to iron ion starvation"/>
    <property type="evidence" value="ECO:0000315"/>
    <property type="project" value="EcoCyc"/>
</dbReference>
<dbReference type="GO" id="GO:0016226">
    <property type="term" value="P:iron-sulfur cluster assembly"/>
    <property type="evidence" value="ECO:0000314"/>
    <property type="project" value="EcoliWiki"/>
</dbReference>
<dbReference type="GO" id="GO:0051604">
    <property type="term" value="P:protein maturation"/>
    <property type="evidence" value="ECO:0007669"/>
    <property type="project" value="UniProtKB-UniRule"/>
</dbReference>
<dbReference type="GO" id="GO:0006979">
    <property type="term" value="P:response to oxidative stress"/>
    <property type="evidence" value="ECO:0000315"/>
    <property type="project" value="EcoCyc"/>
</dbReference>
<dbReference type="FunFam" id="2.60.300.12:FF:000004">
    <property type="entry name" value="Fe/S biogenesis protein NfuA"/>
    <property type="match status" value="1"/>
</dbReference>
<dbReference type="FunFam" id="3.30.300.130:FF:000002">
    <property type="entry name" value="Fe/S biogenesis protein NfuA"/>
    <property type="match status" value="1"/>
</dbReference>
<dbReference type="Gene3D" id="3.30.300.130">
    <property type="entry name" value="Fe-S cluster assembly (FSCA)"/>
    <property type="match status" value="1"/>
</dbReference>
<dbReference type="Gene3D" id="2.60.300.12">
    <property type="entry name" value="HesB-like domain"/>
    <property type="match status" value="1"/>
</dbReference>
<dbReference type="HAMAP" id="MF_01637">
    <property type="entry name" value="Fe_S_biogen_NfuA"/>
    <property type="match status" value="1"/>
</dbReference>
<dbReference type="InterPro" id="IPR017726">
    <property type="entry name" value="Fe/S_biogenesis_protein_NfuA"/>
</dbReference>
<dbReference type="InterPro" id="IPR000361">
    <property type="entry name" value="FeS_biogenesis"/>
</dbReference>
<dbReference type="InterPro" id="IPR034904">
    <property type="entry name" value="FSCA_dom_sf"/>
</dbReference>
<dbReference type="InterPro" id="IPR035903">
    <property type="entry name" value="HesB-like_dom_sf"/>
</dbReference>
<dbReference type="InterPro" id="IPR001075">
    <property type="entry name" value="NIF_FeS_clus_asmbl_NifU_C"/>
</dbReference>
<dbReference type="NCBIfam" id="NF008392">
    <property type="entry name" value="PRK11190.1"/>
    <property type="match status" value="1"/>
</dbReference>
<dbReference type="NCBIfam" id="TIGR03341">
    <property type="entry name" value="YhgI_GntY"/>
    <property type="match status" value="1"/>
</dbReference>
<dbReference type="PANTHER" id="PTHR11178:SF51">
    <property type="entry name" value="FE_S BIOGENESIS PROTEIN NFUA"/>
    <property type="match status" value="1"/>
</dbReference>
<dbReference type="PANTHER" id="PTHR11178">
    <property type="entry name" value="IRON-SULFUR CLUSTER SCAFFOLD PROTEIN NFU-RELATED"/>
    <property type="match status" value="1"/>
</dbReference>
<dbReference type="Pfam" id="PF01521">
    <property type="entry name" value="Fe-S_biosyn"/>
    <property type="match status" value="1"/>
</dbReference>
<dbReference type="Pfam" id="PF01106">
    <property type="entry name" value="NifU"/>
    <property type="match status" value="1"/>
</dbReference>
<dbReference type="SUPFAM" id="SSF117916">
    <property type="entry name" value="Fe-S cluster assembly (FSCA) domain-like"/>
    <property type="match status" value="1"/>
</dbReference>
<dbReference type="SUPFAM" id="SSF89360">
    <property type="entry name" value="HesB-like domain"/>
    <property type="match status" value="1"/>
</dbReference>
<gene>
    <name type="primary">nfuA</name>
    <name evidence="6" type="synonym">gntY</name>
    <name type="synonym">yhgI</name>
    <name type="ordered locus">b3414</name>
    <name type="ordered locus">JW3377</name>
</gene>
<accession>P63020</accession>
<accession>P46847</accession>
<accession>Q2M779</accession>
<evidence type="ECO:0000255" key="1"/>
<evidence type="ECO:0000269" key="2">
    <source>
    </source>
</evidence>
<evidence type="ECO:0000269" key="3">
    <source>
    </source>
</evidence>
<evidence type="ECO:0000269" key="4">
    <source>
    </source>
</evidence>
<evidence type="ECO:0000269" key="5">
    <source>
    </source>
</evidence>
<evidence type="ECO:0000303" key="6">
    <source>
    </source>
</evidence>
<evidence type="ECO:0000305" key="7"/>
<evidence type="ECO:0000305" key="8">
    <source>
    </source>
</evidence>
<reference key="1">
    <citation type="journal article" date="1997" name="Science">
        <title>The complete genome sequence of Escherichia coli K-12.</title>
        <authorList>
            <person name="Blattner F.R."/>
            <person name="Plunkett G. III"/>
            <person name="Bloch C.A."/>
            <person name="Perna N.T."/>
            <person name="Burland V."/>
            <person name="Riley M."/>
            <person name="Collado-Vides J."/>
            <person name="Glasner J.D."/>
            <person name="Rode C.K."/>
            <person name="Mayhew G.F."/>
            <person name="Gregor J."/>
            <person name="Davis N.W."/>
            <person name="Kirkpatrick H.A."/>
            <person name="Goeden M.A."/>
            <person name="Rose D.J."/>
            <person name="Mau B."/>
            <person name="Shao Y."/>
        </authorList>
    </citation>
    <scope>NUCLEOTIDE SEQUENCE [LARGE SCALE GENOMIC DNA]</scope>
    <source>
        <strain>K12 / MG1655 / ATCC 47076</strain>
    </source>
</reference>
<reference key="2">
    <citation type="journal article" date="2006" name="Mol. Syst. Biol.">
        <title>Highly accurate genome sequences of Escherichia coli K-12 strains MG1655 and W3110.</title>
        <authorList>
            <person name="Hayashi K."/>
            <person name="Morooka N."/>
            <person name="Yamamoto Y."/>
            <person name="Fujita K."/>
            <person name="Isono K."/>
            <person name="Choi S."/>
            <person name="Ohtsubo E."/>
            <person name="Baba T."/>
            <person name="Wanner B.L."/>
            <person name="Mori H."/>
            <person name="Horiuchi T."/>
        </authorList>
    </citation>
    <scope>NUCLEOTIDE SEQUENCE [LARGE SCALE GENOMIC DNA]</scope>
    <source>
        <strain>K12 / W3110 / ATCC 27325 / DSM 5911</strain>
    </source>
</reference>
<reference key="3">
    <citation type="journal article" date="1998" name="J. Basic Microbiol.">
        <title>The gluconate high affinity transport of GntI in Escherichia coli involves a multicomponent complex system.</title>
        <authorList>
            <person name="Porco A."/>
            <person name="Alonso G."/>
            <person name="Isturiz T."/>
        </authorList>
    </citation>
    <scope>PRELIMINARY FUNCTION</scope>
    <source>
        <strain>K12 / W3110 / ATCC 27325 / DSM 5911</strain>
    </source>
</reference>
<reference key="4">
    <citation type="journal article" date="2002" name="Protein Eng.">
        <title>Gene expression response to misfolded protein as a screen for soluble recombinant protein.</title>
        <authorList>
            <person name="Lesley S.A."/>
            <person name="Graziano J."/>
            <person name="Cho C.Y."/>
            <person name="Knuth M.W."/>
            <person name="Klock H.E."/>
        </authorList>
    </citation>
    <scope>INDUCTION BY HEAT-SHOCK AND MISFOLDED PROTEINS</scope>
</reference>
<reference key="5">
    <citation type="journal article" date="2003" name="J. Biol. Chem.">
        <title>Global iron-dependent gene regulation in Escherichia coli. A new mechanism for iron homeostasis.</title>
        <authorList>
            <person name="McHugh J.P."/>
            <person name="Rodriguez-Quinones F."/>
            <person name="Abdul-Tehrani H."/>
            <person name="Svistunenko D.A."/>
            <person name="Poole R.K."/>
            <person name="Cooper C.E."/>
            <person name="Andrews S.C."/>
        </authorList>
    </citation>
    <scope>INDUCTION BY IRON DEPLETION CONDITIONS</scope>
</reference>
<reference key="6">
    <citation type="journal article" date="2006" name="J. Bacteriol.">
        <title>Escherichia coli competence gene homologs are essential for competitive fitness and the use of DNA as a nutrient.</title>
        <authorList>
            <person name="Palchevskiy V."/>
            <person name="Finkel S.E."/>
        </authorList>
    </citation>
    <scope>DISRUPTION PHENOTYPE</scope>
    <scope>ROLE IN THE USE OF DNA AS A NUTRIENT</scope>
    <source>
        <strain>K12 / W3110 / ZK126</strain>
    </source>
</reference>
<reference key="7">
    <citation type="journal article" date="2008" name="J. Biol. Chem.">
        <title>NfuA, a new factor required for maturing Fe/S proteins in Escherichia coli under oxidative stress and iron starvation conditions.</title>
        <authorList>
            <person name="Angelini S."/>
            <person name="Gerez C."/>
            <person name="Ollagnier-de Choudens S."/>
            <person name="Sanakis Y."/>
            <person name="Fontecave M."/>
            <person name="Barras F."/>
            <person name="Py B."/>
        </authorList>
    </citation>
    <scope>FUNCTION IN FE/S BIOGENESIS</scope>
    <scope>IRON-SULFUR CLUSTER BINDING</scope>
    <scope>SUBUNIT</scope>
    <scope>INDUCTION BY OXIDATIVE STRESS AND IRON STARVATION</scope>
    <scope>DOMAIN</scope>
    <scope>MUTAGENESIS OF CYS-39; CYS-44; CYS-149 AND CYS-152</scope>
</reference>
<protein>
    <recommendedName>
        <fullName>Fe/S biogenesis protein NfuA</fullName>
    </recommendedName>
</protein>
<sequence length="191" mass="20998">MIRISDAAQAHFAKLLANQEEGTQIRVFVINPGTPNAECGVSYCPPDAVEATDTALKFDLLTAYVDELSAPYLEDAEIDFVTDQLGSQLTLKAPNAKMRKVADDAPLMERVEYMLQSQINPQLAGHGGRVSLMEITEDGYAILQFGGGCNGCSMVDVTLKEGIEKQLLNEFPELKGVRDLTEHQRGEHSYY</sequence>
<name>NFUA_ECOLI</name>
<feature type="chain" id="PRO_0000209464" description="Fe/S biogenesis protein NfuA">
    <location>
        <begin position="1"/>
        <end position="191"/>
    </location>
</feature>
<feature type="binding site" evidence="1">
    <location>
        <position position="149"/>
    </location>
    <ligand>
        <name>[4Fe-4S] cluster</name>
        <dbReference type="ChEBI" id="CHEBI:49883"/>
    </ligand>
</feature>
<feature type="binding site" evidence="1">
    <location>
        <position position="152"/>
    </location>
    <ligand>
        <name>[4Fe-4S] cluster</name>
        <dbReference type="ChEBI" id="CHEBI:49883"/>
    </ligand>
</feature>
<feature type="mutagenesis site" description="No effect on activity in vivo. Still able to bind a Fe/S cluster in vitro." evidence="5">
    <original>C</original>
    <variation>S</variation>
    <location>
        <position position="39"/>
    </location>
</feature>
<feature type="mutagenesis site" description="No effect on activity in vivo." evidence="5">
    <original>C</original>
    <variation>S</variation>
    <location>
        <position position="44"/>
    </location>
</feature>
<feature type="mutagenesis site" description="Loss of activity in vivo. Still able to bind a Fe/S cluster in vitro." evidence="5">
    <original>C</original>
    <variation>S</variation>
    <location>
        <position position="149"/>
    </location>
</feature>
<feature type="mutagenesis site" description="Loss of activity in vivo. Still able to bind a Fe/S cluster in vitro." evidence="5">
    <original>C</original>
    <variation>S</variation>
    <location>
        <position position="152"/>
    </location>
</feature>
<organism>
    <name type="scientific">Escherichia coli (strain K12)</name>
    <dbReference type="NCBI Taxonomy" id="83333"/>
    <lineage>
        <taxon>Bacteria</taxon>
        <taxon>Pseudomonadati</taxon>
        <taxon>Pseudomonadota</taxon>
        <taxon>Gammaproteobacteria</taxon>
        <taxon>Enterobacterales</taxon>
        <taxon>Enterobacteriaceae</taxon>
        <taxon>Escherichia</taxon>
    </lineage>
</organism>